<dbReference type="EMBL" id="CP001233">
    <property type="protein sequence ID" value="ACP05879.1"/>
    <property type="molecule type" value="Genomic_DNA"/>
</dbReference>
<dbReference type="RefSeq" id="WP_001281946.1">
    <property type="nucleotide sequence ID" value="NC_012578.1"/>
</dbReference>
<dbReference type="SMR" id="C3LMV3"/>
<dbReference type="KEGG" id="vcm:VCM66_1566"/>
<dbReference type="HOGENOM" id="CLU_015803_1_0_6"/>
<dbReference type="Proteomes" id="UP000001217">
    <property type="component" value="Chromosome I"/>
</dbReference>
<dbReference type="GO" id="GO:0005886">
    <property type="term" value="C:plasma membrane"/>
    <property type="evidence" value="ECO:0007669"/>
    <property type="project" value="UniProtKB-SubCell"/>
</dbReference>
<dbReference type="GO" id="GO:0015385">
    <property type="term" value="F:sodium:proton antiporter activity"/>
    <property type="evidence" value="ECO:0007669"/>
    <property type="project" value="TreeGrafter"/>
</dbReference>
<dbReference type="GO" id="GO:0006885">
    <property type="term" value="P:regulation of pH"/>
    <property type="evidence" value="ECO:0007669"/>
    <property type="project" value="InterPro"/>
</dbReference>
<dbReference type="Gene3D" id="1.20.1530.10">
    <property type="entry name" value="Na+/H+ antiporter like domain"/>
    <property type="match status" value="1"/>
</dbReference>
<dbReference type="HAMAP" id="MF_01844">
    <property type="entry name" value="NhaA"/>
    <property type="match status" value="1"/>
</dbReference>
<dbReference type="InterPro" id="IPR023171">
    <property type="entry name" value="Na/H_antiporter_dom_sf"/>
</dbReference>
<dbReference type="InterPro" id="IPR004670">
    <property type="entry name" value="NhaA"/>
</dbReference>
<dbReference type="NCBIfam" id="TIGR00773">
    <property type="entry name" value="NhaA"/>
    <property type="match status" value="1"/>
</dbReference>
<dbReference type="NCBIfam" id="NF007111">
    <property type="entry name" value="PRK09560.1"/>
    <property type="match status" value="1"/>
</dbReference>
<dbReference type="NCBIfam" id="NF007112">
    <property type="entry name" value="PRK09561.1"/>
    <property type="match status" value="1"/>
</dbReference>
<dbReference type="PANTHER" id="PTHR30341:SF0">
    <property type="entry name" value="NA(+)_H(+) ANTIPORTER NHAA"/>
    <property type="match status" value="1"/>
</dbReference>
<dbReference type="PANTHER" id="PTHR30341">
    <property type="entry name" value="SODIUM ION/PROTON ANTIPORTER NHAA-RELATED"/>
    <property type="match status" value="1"/>
</dbReference>
<dbReference type="Pfam" id="PF06965">
    <property type="entry name" value="Na_H_antiport_1"/>
    <property type="match status" value="1"/>
</dbReference>
<protein>
    <recommendedName>
        <fullName evidence="1">Na(+)/H(+) antiporter NhaA</fullName>
    </recommendedName>
    <alternativeName>
        <fullName evidence="1">Sodium/proton antiporter NhaA</fullName>
    </alternativeName>
</protein>
<sequence length="382" mass="40316">MSDMIRDFFKMESAGGILLVIAAAIAMVIANSAMGEGYQAFLHTYVFGMSVSHWINDGLMAVFFLLIGLEVKRELLEGALKSRETAIFPAIAAVGGMLAPALIYVAFNFNDPAAIQGWAIPAATDIAFALGIMALLGKRVPVSLKVFLLALAIIDDLGVVVIIALFYSSDLSTIALTIGFIMTGVLFMLNAKHVTKLSIYLVAGLILWIAVLKSGVHATLAGVVIGFAIPLKGNKGEHSPLKHLEHALHPYVAFAILPVFAFANAGISLQGVSLAGLTSMLPLGVALGLFLGKPLGIFSFSWAAVKLGVAKLPEGINFKHIFAVSVLCGIGFTMSIFISSLAFGQANEAYDTYARLGILMGSTTAALLGYSLLRLSLPLKKA</sequence>
<comment type="function">
    <text evidence="1">Na(+)/H(+) antiporter that extrudes sodium in exchange for external protons.</text>
</comment>
<comment type="catalytic activity">
    <reaction evidence="1">
        <text>Na(+)(in) + 2 H(+)(out) = Na(+)(out) + 2 H(+)(in)</text>
        <dbReference type="Rhea" id="RHEA:29251"/>
        <dbReference type="ChEBI" id="CHEBI:15378"/>
        <dbReference type="ChEBI" id="CHEBI:29101"/>
    </reaction>
    <physiologicalReaction direction="left-to-right" evidence="1">
        <dbReference type="Rhea" id="RHEA:29252"/>
    </physiologicalReaction>
</comment>
<comment type="subcellular location">
    <subcellularLocation>
        <location evidence="1">Cell inner membrane</location>
        <topology evidence="1">Multi-pass membrane protein</topology>
    </subcellularLocation>
</comment>
<comment type="similarity">
    <text evidence="1">Belongs to the NhaA Na(+)/H(+) (TC 2.A.33) antiporter family.</text>
</comment>
<keyword id="KW-0050">Antiport</keyword>
<keyword id="KW-0997">Cell inner membrane</keyword>
<keyword id="KW-1003">Cell membrane</keyword>
<keyword id="KW-0406">Ion transport</keyword>
<keyword id="KW-0472">Membrane</keyword>
<keyword id="KW-0915">Sodium</keyword>
<keyword id="KW-0739">Sodium transport</keyword>
<keyword id="KW-0812">Transmembrane</keyword>
<keyword id="KW-1133">Transmembrane helix</keyword>
<keyword id="KW-0813">Transport</keyword>
<gene>
    <name evidence="1" type="primary">nhaA</name>
    <name type="ordered locus">VCM66_1566</name>
</gene>
<proteinExistence type="inferred from homology"/>
<reference key="1">
    <citation type="journal article" date="2008" name="PLoS ONE">
        <title>A recalibrated molecular clock and independent origins for the cholera pandemic clones.</title>
        <authorList>
            <person name="Feng L."/>
            <person name="Reeves P.R."/>
            <person name="Lan R."/>
            <person name="Ren Y."/>
            <person name="Gao C."/>
            <person name="Zhou Z."/>
            <person name="Ren Y."/>
            <person name="Cheng J."/>
            <person name="Wang W."/>
            <person name="Wang J."/>
            <person name="Qian W."/>
            <person name="Li D."/>
            <person name="Wang L."/>
        </authorList>
    </citation>
    <scope>NUCLEOTIDE SEQUENCE [LARGE SCALE GENOMIC DNA]</scope>
    <source>
        <strain>M66-2</strain>
    </source>
</reference>
<name>NHAA_VIBCM</name>
<feature type="chain" id="PRO_1000188442" description="Na(+)/H(+) antiporter NhaA">
    <location>
        <begin position="1"/>
        <end position="382"/>
    </location>
</feature>
<feature type="transmembrane region" description="Helical" evidence="1">
    <location>
        <begin position="14"/>
        <end position="34"/>
    </location>
</feature>
<feature type="transmembrane region" description="Helical" evidence="1">
    <location>
        <begin position="47"/>
        <end position="67"/>
    </location>
</feature>
<feature type="transmembrane region" description="Helical" evidence="1">
    <location>
        <begin position="87"/>
        <end position="107"/>
    </location>
</feature>
<feature type="transmembrane region" description="Helical" evidence="1">
    <location>
        <begin position="117"/>
        <end position="137"/>
    </location>
</feature>
<feature type="transmembrane region" description="Helical" evidence="1">
    <location>
        <begin position="146"/>
        <end position="166"/>
    </location>
</feature>
<feature type="transmembrane region" description="Helical" evidence="1">
    <location>
        <begin position="171"/>
        <end position="191"/>
    </location>
</feature>
<feature type="transmembrane region" description="Helical" evidence="1">
    <location>
        <begin position="205"/>
        <end position="225"/>
    </location>
</feature>
<feature type="transmembrane region" description="Helical" evidence="1">
    <location>
        <begin position="247"/>
        <end position="267"/>
    </location>
</feature>
<feature type="transmembrane region" description="Helical" evidence="1">
    <location>
        <begin position="271"/>
        <end position="291"/>
    </location>
</feature>
<feature type="transmembrane region" description="Helical" evidence="1">
    <location>
        <begin position="321"/>
        <end position="341"/>
    </location>
</feature>
<feature type="transmembrane region" description="Helical" evidence="1">
    <location>
        <begin position="353"/>
        <end position="373"/>
    </location>
</feature>
<evidence type="ECO:0000255" key="1">
    <source>
        <dbReference type="HAMAP-Rule" id="MF_01844"/>
    </source>
</evidence>
<accession>C3LMV3</accession>
<organism>
    <name type="scientific">Vibrio cholerae serotype O1 (strain M66-2)</name>
    <dbReference type="NCBI Taxonomy" id="579112"/>
    <lineage>
        <taxon>Bacteria</taxon>
        <taxon>Pseudomonadati</taxon>
        <taxon>Pseudomonadota</taxon>
        <taxon>Gammaproteobacteria</taxon>
        <taxon>Vibrionales</taxon>
        <taxon>Vibrionaceae</taxon>
        <taxon>Vibrio</taxon>
    </lineage>
</organism>